<proteinExistence type="inferred from homology"/>
<dbReference type="EMBL" id="X52471">
    <property type="protein sequence ID" value="CAA36709.1"/>
    <property type="molecule type" value="Genomic_DNA"/>
</dbReference>
<dbReference type="SMR" id="P19772"/>
<dbReference type="InterPro" id="IPR009057">
    <property type="entry name" value="Homeodomain-like_sf"/>
</dbReference>
<dbReference type="SUPFAM" id="SSF46689">
    <property type="entry name" value="Homeodomain-like"/>
    <property type="match status" value="1"/>
</dbReference>
<accession>P19772</accession>
<sequence length="59" mass="6669">MRKWVRQAQVDAGARPGTTTEESAEIKRLRRDNAELRRANAILKTASAFFAAELDRPAR</sequence>
<organism>
    <name type="scientific">Mycobacterium tuberculosis</name>
    <dbReference type="NCBI Taxonomy" id="1773"/>
    <lineage>
        <taxon>Bacteria</taxon>
        <taxon>Bacillati</taxon>
        <taxon>Actinomycetota</taxon>
        <taxon>Actinomycetes</taxon>
        <taxon>Mycobacteriales</taxon>
        <taxon>Mycobacteriaceae</taxon>
        <taxon>Mycobacterium</taxon>
        <taxon>Mycobacterium tuberculosis complex</taxon>
    </lineage>
</organism>
<protein>
    <recommendedName>
        <fullName>Insertion element IS986 uncharacterized 6.6 kDa protein</fullName>
    </recommendedName>
    <alternativeName>
        <fullName>ORFA2</fullName>
    </alternativeName>
</protein>
<comment type="similarity">
    <text evidence="2">Belongs to the transposase 8 family.</text>
</comment>
<feature type="chain" id="PRO_0000075509" description="Insertion element IS986 uncharacterized 6.6 kDa protein">
    <location>
        <begin position="1"/>
        <end position="59"/>
    </location>
</feature>
<feature type="region of interest" description="Disordered" evidence="1">
    <location>
        <begin position="1"/>
        <end position="26"/>
    </location>
</feature>
<keyword id="KW-0814">Transposable element</keyword>
<reference key="1">
    <citation type="journal article" date="1990" name="Mol. Microbiol.">
        <title>Characterization of a Mycobacterium tuberculosis insertion sequence belonging to the IS3 family.</title>
        <authorList>
            <person name="McAdam R.A."/>
            <person name="Hermans P.W.M."/>
            <person name="van Soolingen D."/>
            <person name="Zainuddin Z.F."/>
            <person name="Catty D."/>
            <person name="van Embden J.D.A."/>
            <person name="Dale J.W."/>
        </authorList>
    </citation>
    <scope>NUCLEOTIDE SEQUENCE [GENOMIC DNA]</scope>
</reference>
<evidence type="ECO:0000256" key="1">
    <source>
        <dbReference type="SAM" id="MobiDB-lite"/>
    </source>
</evidence>
<evidence type="ECO:0000305" key="2"/>
<name>YIA2_MYCTX</name>